<name>Y2829_DICDI</name>
<comment type="function">
    <text evidence="1">Probable adapter protein and signal transducer that links members of the tumor necrosis factor receptor family to different signaling pathways by association with the receptor cytoplasmic domain and kinases.</text>
</comment>
<comment type="subcellular location">
    <subcellularLocation>
        <location evidence="1">Cytoplasm</location>
    </subcellularLocation>
</comment>
<comment type="domain">
    <text>The MATH/TRAF domain binds to receptor cytoplasmic domains.</text>
</comment>
<comment type="similarity">
    <text evidence="6">Belongs to the TNF receptor-associated factor family.</text>
</comment>
<organism>
    <name type="scientific">Dictyostelium discoideum</name>
    <name type="common">Social amoeba</name>
    <dbReference type="NCBI Taxonomy" id="44689"/>
    <lineage>
        <taxon>Eukaryota</taxon>
        <taxon>Amoebozoa</taxon>
        <taxon>Evosea</taxon>
        <taxon>Eumycetozoa</taxon>
        <taxon>Dictyostelia</taxon>
        <taxon>Dictyosteliales</taxon>
        <taxon>Dictyosteliaceae</taxon>
        <taxon>Dictyostelium</taxon>
    </lineage>
</organism>
<dbReference type="EMBL" id="AAFI02000008">
    <property type="protein sequence ID" value="EAL71052.1"/>
    <property type="molecule type" value="Genomic_DNA"/>
</dbReference>
<dbReference type="RefSeq" id="XP_644932.1">
    <property type="nucleotide sequence ID" value="XM_639840.1"/>
</dbReference>
<dbReference type="STRING" id="44689.Q86L54"/>
<dbReference type="PaxDb" id="44689-DDB0168944"/>
<dbReference type="EnsemblProtists" id="EAL71052">
    <property type="protein sequence ID" value="EAL71052"/>
    <property type="gene ID" value="DDB_G0272829"/>
</dbReference>
<dbReference type="GeneID" id="8618611"/>
<dbReference type="KEGG" id="ddi:DDB_G0272829"/>
<dbReference type="dictyBase" id="DDB_G0272829"/>
<dbReference type="VEuPathDB" id="AmoebaDB:DDB_G0272829"/>
<dbReference type="HOGENOM" id="CLU_514306_0_0_1"/>
<dbReference type="InParanoid" id="Q86L54"/>
<dbReference type="OMA" id="HENQYCQ"/>
<dbReference type="PhylomeDB" id="Q86L54"/>
<dbReference type="PRO" id="PR:Q86L54"/>
<dbReference type="Proteomes" id="UP000002195">
    <property type="component" value="Chromosome 2"/>
</dbReference>
<dbReference type="GO" id="GO:0005737">
    <property type="term" value="C:cytoplasm"/>
    <property type="evidence" value="ECO:0000318"/>
    <property type="project" value="GO_Central"/>
</dbReference>
<dbReference type="GO" id="GO:0008270">
    <property type="term" value="F:zinc ion binding"/>
    <property type="evidence" value="ECO:0007669"/>
    <property type="project" value="UniProtKB-KW"/>
</dbReference>
<dbReference type="Gene3D" id="3.30.40.10">
    <property type="entry name" value="Zinc/RING finger domain, C3HC4 (zinc finger)"/>
    <property type="match status" value="4"/>
</dbReference>
<dbReference type="InterPro" id="IPR001841">
    <property type="entry name" value="Znf_RING"/>
</dbReference>
<dbReference type="InterPro" id="IPR013083">
    <property type="entry name" value="Znf_RING/FYVE/PHD"/>
</dbReference>
<dbReference type="InterPro" id="IPR001293">
    <property type="entry name" value="Znf_TRAF"/>
</dbReference>
<dbReference type="PANTHER" id="PTHR10131:SF65">
    <property type="entry name" value="RING FINGER PROTEIN DG17-RELATED"/>
    <property type="match status" value="1"/>
</dbReference>
<dbReference type="PANTHER" id="PTHR10131">
    <property type="entry name" value="TNF RECEPTOR ASSOCIATED FACTOR"/>
    <property type="match status" value="1"/>
</dbReference>
<dbReference type="SUPFAM" id="SSF57850">
    <property type="entry name" value="RING/U-box"/>
    <property type="match status" value="1"/>
</dbReference>
<dbReference type="SUPFAM" id="SSF49599">
    <property type="entry name" value="TRAF domain-like"/>
    <property type="match status" value="2"/>
</dbReference>
<dbReference type="PROSITE" id="PS50089">
    <property type="entry name" value="ZF_RING_2"/>
    <property type="match status" value="1"/>
</dbReference>
<dbReference type="PROSITE" id="PS50145">
    <property type="entry name" value="ZF_TRAF"/>
    <property type="match status" value="1"/>
</dbReference>
<proteinExistence type="inferred from homology"/>
<accession>Q86L54</accession>
<accession>Q558Y4</accession>
<protein>
    <recommendedName>
        <fullName>TNF receptor-associated factor family protein DDB_G0272829</fullName>
    </recommendedName>
</protein>
<gene>
    <name type="ORF">DDB_G0272829</name>
</gene>
<sequence length="530" mass="61564">MKLGRDIPIYKLIIIKNESIENNLKEISFSDNFKCQICEGLLISSLIPNRMKALQCINGHCFCLTCWESILEIKSECPTCRIQIQSMNTLSNNLFIIKSISESIKIHCPNYLNFDNSNNFNGCKEIITIDEIDRHESKCEFRFIKCSINNQCNEIIRFNERDKHESQCDFIIQKCTHCDESVQMKQMQGHILFECLKVLITCQHCSLQFTRLKLQNHIENHCKEIKIECPFKSLKIIYNNNNNDNDNNDSDENNSNQSLSSSSLSSSIIPLSPCNELMKRSELSKHFIRNHQYHNELVSIVLKKQENKIKKLETIIQQNNVNQNFEISIIKHSNSLTRDSFYKENKKKDKLIQDLMKRVLILEHQQQQNQIQNQIQNQIQKLSNKSIFTTTTTTTSTSDKNNNNNNNNNNNNNNNNEDEEDDDNIKNNDNQGNLKSLREMFNTISNFKDDENEQQQIQQQQQLPFTSFGPLSVQQQNNPTKQFNQLSQPQTQPQSQSQSQSLFGEWSPITINQNQNTPSNPFSIFSGTSL</sequence>
<reference key="1">
    <citation type="journal article" date="2002" name="Nature">
        <title>Sequence and analysis of chromosome 2 of Dictyostelium discoideum.</title>
        <authorList>
            <person name="Gloeckner G."/>
            <person name="Eichinger L."/>
            <person name="Szafranski K."/>
            <person name="Pachebat J.A."/>
            <person name="Bankier A.T."/>
            <person name="Dear P.H."/>
            <person name="Lehmann R."/>
            <person name="Baumgart C."/>
            <person name="Parra G."/>
            <person name="Abril J.F."/>
            <person name="Guigo R."/>
            <person name="Kumpf K."/>
            <person name="Tunggal B."/>
            <person name="Cox E.C."/>
            <person name="Quail M.A."/>
            <person name="Platzer M."/>
            <person name="Rosenthal A."/>
            <person name="Noegel A.A."/>
        </authorList>
    </citation>
    <scope>NUCLEOTIDE SEQUENCE [LARGE SCALE GENOMIC DNA]</scope>
    <source>
        <strain>AX4</strain>
    </source>
</reference>
<reference key="2">
    <citation type="journal article" date="2005" name="Nature">
        <title>The genome of the social amoeba Dictyostelium discoideum.</title>
        <authorList>
            <person name="Eichinger L."/>
            <person name="Pachebat J.A."/>
            <person name="Gloeckner G."/>
            <person name="Rajandream M.A."/>
            <person name="Sucgang R."/>
            <person name="Berriman M."/>
            <person name="Song J."/>
            <person name="Olsen R."/>
            <person name="Szafranski K."/>
            <person name="Xu Q."/>
            <person name="Tunggal B."/>
            <person name="Kummerfeld S."/>
            <person name="Madera M."/>
            <person name="Konfortov B.A."/>
            <person name="Rivero F."/>
            <person name="Bankier A.T."/>
            <person name="Lehmann R."/>
            <person name="Hamlin N."/>
            <person name="Davies R."/>
            <person name="Gaudet P."/>
            <person name="Fey P."/>
            <person name="Pilcher K."/>
            <person name="Chen G."/>
            <person name="Saunders D."/>
            <person name="Sodergren E.J."/>
            <person name="Davis P."/>
            <person name="Kerhornou A."/>
            <person name="Nie X."/>
            <person name="Hall N."/>
            <person name="Anjard C."/>
            <person name="Hemphill L."/>
            <person name="Bason N."/>
            <person name="Farbrother P."/>
            <person name="Desany B."/>
            <person name="Just E."/>
            <person name="Morio T."/>
            <person name="Rost R."/>
            <person name="Churcher C.M."/>
            <person name="Cooper J."/>
            <person name="Haydock S."/>
            <person name="van Driessche N."/>
            <person name="Cronin A."/>
            <person name="Goodhead I."/>
            <person name="Muzny D.M."/>
            <person name="Mourier T."/>
            <person name="Pain A."/>
            <person name="Lu M."/>
            <person name="Harper D."/>
            <person name="Lindsay R."/>
            <person name="Hauser H."/>
            <person name="James K.D."/>
            <person name="Quiles M."/>
            <person name="Madan Babu M."/>
            <person name="Saito T."/>
            <person name="Buchrieser C."/>
            <person name="Wardroper A."/>
            <person name="Felder M."/>
            <person name="Thangavelu M."/>
            <person name="Johnson D."/>
            <person name="Knights A."/>
            <person name="Loulseged H."/>
            <person name="Mungall K.L."/>
            <person name="Oliver K."/>
            <person name="Price C."/>
            <person name="Quail M.A."/>
            <person name="Urushihara H."/>
            <person name="Hernandez J."/>
            <person name="Rabbinowitsch E."/>
            <person name="Steffen D."/>
            <person name="Sanders M."/>
            <person name="Ma J."/>
            <person name="Kohara Y."/>
            <person name="Sharp S."/>
            <person name="Simmonds M.N."/>
            <person name="Spiegler S."/>
            <person name="Tivey A."/>
            <person name="Sugano S."/>
            <person name="White B."/>
            <person name="Walker D."/>
            <person name="Woodward J.R."/>
            <person name="Winckler T."/>
            <person name="Tanaka Y."/>
            <person name="Shaulsky G."/>
            <person name="Schleicher M."/>
            <person name="Weinstock G.M."/>
            <person name="Rosenthal A."/>
            <person name="Cox E.C."/>
            <person name="Chisholm R.L."/>
            <person name="Gibbs R.A."/>
            <person name="Loomis W.F."/>
            <person name="Platzer M."/>
            <person name="Kay R.R."/>
            <person name="Williams J.G."/>
            <person name="Dear P.H."/>
            <person name="Noegel A.A."/>
            <person name="Barrell B.G."/>
            <person name="Kuspa A."/>
        </authorList>
    </citation>
    <scope>NUCLEOTIDE SEQUENCE [LARGE SCALE GENOMIC DNA]</scope>
    <source>
        <strain>AX4</strain>
    </source>
</reference>
<evidence type="ECO:0000250" key="1"/>
<evidence type="ECO:0000255" key="2"/>
<evidence type="ECO:0000255" key="3">
    <source>
        <dbReference type="PROSITE-ProRule" id="PRU00175"/>
    </source>
</evidence>
<evidence type="ECO:0000255" key="4">
    <source>
        <dbReference type="PROSITE-ProRule" id="PRU00207"/>
    </source>
</evidence>
<evidence type="ECO:0000256" key="5">
    <source>
        <dbReference type="SAM" id="MobiDB-lite"/>
    </source>
</evidence>
<evidence type="ECO:0000305" key="6"/>
<keyword id="KW-0175">Coiled coil</keyword>
<keyword id="KW-0963">Cytoplasm</keyword>
<keyword id="KW-0479">Metal-binding</keyword>
<keyword id="KW-1185">Reference proteome</keyword>
<keyword id="KW-0677">Repeat</keyword>
<keyword id="KW-0862">Zinc</keyword>
<keyword id="KW-0863">Zinc-finger</keyword>
<feature type="chain" id="PRO_0000393768" description="TNF receptor-associated factor family protein DDB_G0272829">
    <location>
        <begin position="1"/>
        <end position="530"/>
    </location>
</feature>
<feature type="zinc finger region" description="RING-type; degenerate" evidence="3">
    <location>
        <begin position="35"/>
        <end position="81"/>
    </location>
</feature>
<feature type="zinc finger region" description="TRAF-type 1" evidence="4">
    <location>
        <begin position="134"/>
        <end position="188"/>
    </location>
</feature>
<feature type="zinc finger region" description="TRAF-type 2" evidence="4">
    <location>
        <begin position="189"/>
        <end position="246"/>
    </location>
</feature>
<feature type="region of interest" description="Disordered" evidence="5">
    <location>
        <begin position="242"/>
        <end position="267"/>
    </location>
</feature>
<feature type="region of interest" description="Disordered" evidence="5">
    <location>
        <begin position="391"/>
        <end position="432"/>
    </location>
</feature>
<feature type="region of interest" description="Disordered" evidence="5">
    <location>
        <begin position="483"/>
        <end position="530"/>
    </location>
</feature>
<feature type="coiled-coil region" evidence="2">
    <location>
        <begin position="361"/>
        <end position="422"/>
    </location>
</feature>
<feature type="compositionally biased region" description="Low complexity" evidence="5">
    <location>
        <begin position="253"/>
        <end position="267"/>
    </location>
</feature>
<feature type="compositionally biased region" description="Low complexity" evidence="5">
    <location>
        <begin position="391"/>
        <end position="415"/>
    </location>
</feature>
<feature type="compositionally biased region" description="Low complexity" evidence="5">
    <location>
        <begin position="485"/>
        <end position="502"/>
    </location>
</feature>
<feature type="compositionally biased region" description="Polar residues" evidence="5">
    <location>
        <begin position="509"/>
        <end position="530"/>
    </location>
</feature>